<keyword id="KW-0687">Ribonucleoprotein</keyword>
<keyword id="KW-0689">Ribosomal protein</keyword>
<organism>
    <name type="scientific">Bacillus cereus (strain AH820)</name>
    <dbReference type="NCBI Taxonomy" id="405535"/>
    <lineage>
        <taxon>Bacteria</taxon>
        <taxon>Bacillati</taxon>
        <taxon>Bacillota</taxon>
        <taxon>Bacilli</taxon>
        <taxon>Bacillales</taxon>
        <taxon>Bacillaceae</taxon>
        <taxon>Bacillus</taxon>
        <taxon>Bacillus cereus group</taxon>
    </lineage>
</organism>
<evidence type="ECO:0000255" key="1">
    <source>
        <dbReference type="HAMAP-Rule" id="MF_00291"/>
    </source>
</evidence>
<evidence type="ECO:0000305" key="2"/>
<sequence length="233" mass="26517">MSVISMKQLLEAGVHFGHQTRRWNPKMKRYIFTERNGIYIIDLQKTVKKVEEAFKVMRDIAAEGGDILFVGTKKQAQEAIKEEATRAGMYFVNQRWLGGTLTNFQTIQKRIKRLKDIERMQEDGTFEVLPKKEVVQLKKELERLEKFLGGIKDMKGLPSALFVVDPRKERIAVAEARKLHIPIIGIVDTNCDPDEIDHVIPANDDAIRAVKLLTSKMADAILEAKQGEETVTA</sequence>
<name>RS2_BACC0</name>
<comment type="similarity">
    <text evidence="1">Belongs to the universal ribosomal protein uS2 family.</text>
</comment>
<reference key="1">
    <citation type="submission" date="2008-10" db="EMBL/GenBank/DDBJ databases">
        <title>Genome sequence of Bacillus cereus AH820.</title>
        <authorList>
            <person name="Dodson R.J."/>
            <person name="Durkin A.S."/>
            <person name="Rosovitz M.J."/>
            <person name="Rasko D.A."/>
            <person name="Hoffmaster A."/>
            <person name="Ravel J."/>
            <person name="Sutton G."/>
        </authorList>
    </citation>
    <scope>NUCLEOTIDE SEQUENCE [LARGE SCALE GENOMIC DNA]</scope>
    <source>
        <strain>AH820</strain>
    </source>
</reference>
<gene>
    <name evidence="1" type="primary">rpsB</name>
    <name type="ordered locus">BCAH820_3839</name>
</gene>
<dbReference type="EMBL" id="CP001283">
    <property type="protein sequence ID" value="ACK89504.1"/>
    <property type="molecule type" value="Genomic_DNA"/>
</dbReference>
<dbReference type="RefSeq" id="WP_000111483.1">
    <property type="nucleotide sequence ID" value="NC_011773.1"/>
</dbReference>
<dbReference type="SMR" id="B7JJA5"/>
<dbReference type="GeneID" id="75086962"/>
<dbReference type="KEGG" id="bcu:BCAH820_3839"/>
<dbReference type="HOGENOM" id="CLU_040318_1_2_9"/>
<dbReference type="Proteomes" id="UP000001363">
    <property type="component" value="Chromosome"/>
</dbReference>
<dbReference type="GO" id="GO:0022627">
    <property type="term" value="C:cytosolic small ribosomal subunit"/>
    <property type="evidence" value="ECO:0007669"/>
    <property type="project" value="TreeGrafter"/>
</dbReference>
<dbReference type="GO" id="GO:0003735">
    <property type="term" value="F:structural constituent of ribosome"/>
    <property type="evidence" value="ECO:0007669"/>
    <property type="project" value="InterPro"/>
</dbReference>
<dbReference type="GO" id="GO:0006412">
    <property type="term" value="P:translation"/>
    <property type="evidence" value="ECO:0007669"/>
    <property type="project" value="UniProtKB-UniRule"/>
</dbReference>
<dbReference type="CDD" id="cd01425">
    <property type="entry name" value="RPS2"/>
    <property type="match status" value="1"/>
</dbReference>
<dbReference type="FunFam" id="1.10.287.610:FF:000001">
    <property type="entry name" value="30S ribosomal protein S2"/>
    <property type="match status" value="1"/>
</dbReference>
<dbReference type="Gene3D" id="3.40.50.10490">
    <property type="entry name" value="Glucose-6-phosphate isomerase like protein, domain 1"/>
    <property type="match status" value="1"/>
</dbReference>
<dbReference type="Gene3D" id="1.10.287.610">
    <property type="entry name" value="Helix hairpin bin"/>
    <property type="match status" value="1"/>
</dbReference>
<dbReference type="HAMAP" id="MF_00291_B">
    <property type="entry name" value="Ribosomal_uS2_B"/>
    <property type="match status" value="1"/>
</dbReference>
<dbReference type="InterPro" id="IPR001865">
    <property type="entry name" value="Ribosomal_uS2"/>
</dbReference>
<dbReference type="InterPro" id="IPR005706">
    <property type="entry name" value="Ribosomal_uS2_bac/mit/plastid"/>
</dbReference>
<dbReference type="InterPro" id="IPR018130">
    <property type="entry name" value="Ribosomal_uS2_CS"/>
</dbReference>
<dbReference type="InterPro" id="IPR023591">
    <property type="entry name" value="Ribosomal_uS2_flav_dom_sf"/>
</dbReference>
<dbReference type="NCBIfam" id="TIGR01011">
    <property type="entry name" value="rpsB_bact"/>
    <property type="match status" value="1"/>
</dbReference>
<dbReference type="PANTHER" id="PTHR12534">
    <property type="entry name" value="30S RIBOSOMAL PROTEIN S2 PROKARYOTIC AND ORGANELLAR"/>
    <property type="match status" value="1"/>
</dbReference>
<dbReference type="PANTHER" id="PTHR12534:SF0">
    <property type="entry name" value="SMALL RIBOSOMAL SUBUNIT PROTEIN US2M"/>
    <property type="match status" value="1"/>
</dbReference>
<dbReference type="Pfam" id="PF00318">
    <property type="entry name" value="Ribosomal_S2"/>
    <property type="match status" value="1"/>
</dbReference>
<dbReference type="PRINTS" id="PR00395">
    <property type="entry name" value="RIBOSOMALS2"/>
</dbReference>
<dbReference type="SUPFAM" id="SSF52313">
    <property type="entry name" value="Ribosomal protein S2"/>
    <property type="match status" value="1"/>
</dbReference>
<dbReference type="PROSITE" id="PS00962">
    <property type="entry name" value="RIBOSOMAL_S2_1"/>
    <property type="match status" value="1"/>
</dbReference>
<dbReference type="PROSITE" id="PS00963">
    <property type="entry name" value="RIBOSOMAL_S2_2"/>
    <property type="match status" value="1"/>
</dbReference>
<protein>
    <recommendedName>
        <fullName evidence="1">Small ribosomal subunit protein uS2</fullName>
    </recommendedName>
    <alternativeName>
        <fullName evidence="2">30S ribosomal protein S2</fullName>
    </alternativeName>
</protein>
<proteinExistence type="inferred from homology"/>
<accession>B7JJA5</accession>
<feature type="chain" id="PRO_1000119415" description="Small ribosomal subunit protein uS2">
    <location>
        <begin position="1"/>
        <end position="233"/>
    </location>
</feature>